<proteinExistence type="inferred from homology"/>
<accession>P27060</accession>
<sequence>MSDTLKRLQKIVSEQLSVDPEKVTSTADFGKQLGADSLDIIELIMTIEYEFNIDIEDHYASKITTVQDALNYIENKIKQK</sequence>
<organism>
    <name type="scientific">Cylindrotheca sp. (strain N1)</name>
    <name type="common">Marine diatom</name>
    <dbReference type="NCBI Taxonomy" id="2855"/>
    <lineage>
        <taxon>Eukaryota</taxon>
        <taxon>Sar</taxon>
        <taxon>Stramenopiles</taxon>
        <taxon>Ochrophyta</taxon>
        <taxon>Bacillariophyta</taxon>
        <taxon>Bacillariophyceae</taxon>
        <taxon>Bacillariophycidae</taxon>
        <taxon>Bacillariales</taxon>
        <taxon>Bacillariaceae</taxon>
        <taxon>Cylindrotheca</taxon>
    </lineage>
</organism>
<evidence type="ECO:0000255" key="1">
    <source>
        <dbReference type="HAMAP-Rule" id="MF_01217"/>
    </source>
</evidence>
<evidence type="ECO:0000255" key="2">
    <source>
        <dbReference type="PROSITE-ProRule" id="PRU00258"/>
    </source>
</evidence>
<feature type="chain" id="PRO_0000180231" description="Acyl carrier protein">
    <location>
        <begin position="1"/>
        <end position="80"/>
    </location>
</feature>
<feature type="domain" description="Carrier" evidence="2">
    <location>
        <begin position="2"/>
        <end position="77"/>
    </location>
</feature>
<feature type="modified residue" description="O-(pantetheine 4'-phosphoryl)serine" evidence="2">
    <location>
        <position position="37"/>
    </location>
</feature>
<protein>
    <recommendedName>
        <fullName evidence="1">Acyl carrier protein</fullName>
        <shortName evidence="1">ACP</shortName>
    </recommendedName>
</protein>
<reference key="1">
    <citation type="journal article" date="1991" name="J. Biol. Chem.">
        <title>Acyl carrier protein-derived sequence encoded by the chloroplast genome in the marine diatom Cylindrotheca sp. strain N1.</title>
        <authorList>
            <person name="Hwang S.-R."/>
            <person name="Tabita F.R."/>
        </authorList>
    </citation>
    <scope>NUCLEOTIDE SEQUENCE [GENOMIC DNA]</scope>
</reference>
<geneLocation type="chloroplast"/>
<name>ACP_CYLSN</name>
<comment type="function">
    <text evidence="1">Carrier of the growing fatty acid chain in fatty acid biosynthesis.</text>
</comment>
<comment type="pathway">
    <text evidence="1">Lipid metabolism; fatty acid biosynthesis.</text>
</comment>
<comment type="subcellular location">
    <subcellularLocation>
        <location>Plastid</location>
        <location>Chloroplast</location>
    </subcellularLocation>
</comment>
<comment type="PTM">
    <text evidence="1">4'-phosphopantetheine is transferred from CoA to a specific serine of apo-ACP by AcpS. This modification is essential for activity because fatty acids are bound in thioester linkage to the sulfhydryl of the prosthetic group.</text>
</comment>
<comment type="similarity">
    <text evidence="1">Belongs to the acyl carrier protein (ACP) family.</text>
</comment>
<keyword id="KW-0150">Chloroplast</keyword>
<keyword id="KW-0275">Fatty acid biosynthesis</keyword>
<keyword id="KW-0276">Fatty acid metabolism</keyword>
<keyword id="KW-0444">Lipid biosynthesis</keyword>
<keyword id="KW-0443">Lipid metabolism</keyword>
<keyword id="KW-0596">Phosphopantetheine</keyword>
<keyword id="KW-0597">Phosphoprotein</keyword>
<keyword id="KW-0934">Plastid</keyword>
<gene>
    <name evidence="1" type="primary">acpP</name>
    <name type="synonym">acl1</name>
    <name type="synonym">acp</name>
</gene>
<dbReference type="EMBL" id="M64995">
    <property type="protein sequence ID" value="AAA84191.1"/>
    <property type="molecule type" value="Genomic_DNA"/>
</dbReference>
<dbReference type="PIR" id="A39452">
    <property type="entry name" value="A39452"/>
</dbReference>
<dbReference type="SMR" id="P27060"/>
<dbReference type="UniPathway" id="UPA00094"/>
<dbReference type="GO" id="GO:0009507">
    <property type="term" value="C:chloroplast"/>
    <property type="evidence" value="ECO:0007669"/>
    <property type="project" value="UniProtKB-SubCell"/>
</dbReference>
<dbReference type="GO" id="GO:0000035">
    <property type="term" value="F:acyl binding"/>
    <property type="evidence" value="ECO:0007669"/>
    <property type="project" value="TreeGrafter"/>
</dbReference>
<dbReference type="GO" id="GO:0000036">
    <property type="term" value="F:acyl carrier activity"/>
    <property type="evidence" value="ECO:0007669"/>
    <property type="project" value="UniProtKB-UniRule"/>
</dbReference>
<dbReference type="Gene3D" id="1.10.1200.10">
    <property type="entry name" value="ACP-like"/>
    <property type="match status" value="1"/>
</dbReference>
<dbReference type="HAMAP" id="MF_01217">
    <property type="entry name" value="Acyl_carrier"/>
    <property type="match status" value="1"/>
</dbReference>
<dbReference type="InterPro" id="IPR003231">
    <property type="entry name" value="ACP"/>
</dbReference>
<dbReference type="InterPro" id="IPR036736">
    <property type="entry name" value="ACP-like_sf"/>
</dbReference>
<dbReference type="InterPro" id="IPR009081">
    <property type="entry name" value="PP-bd_ACP"/>
</dbReference>
<dbReference type="InterPro" id="IPR006162">
    <property type="entry name" value="Ppantetheine_attach_site"/>
</dbReference>
<dbReference type="NCBIfam" id="TIGR00517">
    <property type="entry name" value="acyl_carrier"/>
    <property type="match status" value="1"/>
</dbReference>
<dbReference type="NCBIfam" id="NF002148">
    <property type="entry name" value="PRK00982.1-2"/>
    <property type="match status" value="1"/>
</dbReference>
<dbReference type="NCBIfam" id="NF002150">
    <property type="entry name" value="PRK00982.1-4"/>
    <property type="match status" value="1"/>
</dbReference>
<dbReference type="NCBIfam" id="NF002151">
    <property type="entry name" value="PRK00982.1-5"/>
    <property type="match status" value="1"/>
</dbReference>
<dbReference type="PANTHER" id="PTHR20863">
    <property type="entry name" value="ACYL CARRIER PROTEIN"/>
    <property type="match status" value="1"/>
</dbReference>
<dbReference type="PANTHER" id="PTHR20863:SF76">
    <property type="entry name" value="CARRIER DOMAIN-CONTAINING PROTEIN"/>
    <property type="match status" value="1"/>
</dbReference>
<dbReference type="Pfam" id="PF00550">
    <property type="entry name" value="PP-binding"/>
    <property type="match status" value="1"/>
</dbReference>
<dbReference type="SUPFAM" id="SSF47336">
    <property type="entry name" value="ACP-like"/>
    <property type="match status" value="1"/>
</dbReference>
<dbReference type="PROSITE" id="PS50075">
    <property type="entry name" value="CARRIER"/>
    <property type="match status" value="1"/>
</dbReference>
<dbReference type="PROSITE" id="PS00012">
    <property type="entry name" value="PHOSPHOPANTETHEINE"/>
    <property type="match status" value="1"/>
</dbReference>